<protein>
    <recommendedName>
        <fullName evidence="1">UPF0342 protein spyM18_0873</fullName>
    </recommendedName>
</protein>
<gene>
    <name type="ordered locus">spyM18_0873</name>
</gene>
<reference key="1">
    <citation type="journal article" date="2002" name="Proc. Natl. Acad. Sci. U.S.A.">
        <title>Genome sequence and comparative microarray analysis of serotype M18 group A Streptococcus strains associated with acute rheumatic fever outbreaks.</title>
        <authorList>
            <person name="Smoot J.C."/>
            <person name="Barbian K.D."/>
            <person name="Van Gompel J.J."/>
            <person name="Smoot L.M."/>
            <person name="Chaussee M.S."/>
            <person name="Sylva G.L."/>
            <person name="Sturdevant D.E."/>
            <person name="Ricklefs S.M."/>
            <person name="Porcella S.F."/>
            <person name="Parkins L.D."/>
            <person name="Beres S.B."/>
            <person name="Campbell D.S."/>
            <person name="Smith T.M."/>
            <person name="Zhang Q."/>
            <person name="Kapur V."/>
            <person name="Daly J.A."/>
            <person name="Veasy L.G."/>
            <person name="Musser J.M."/>
        </authorList>
    </citation>
    <scope>NUCLEOTIDE SEQUENCE [LARGE SCALE GENOMIC DNA]</scope>
    <source>
        <strain>MGAS8232</strain>
    </source>
</reference>
<feature type="chain" id="PRO_0000109999" description="UPF0342 protein spyM18_0873">
    <location>
        <begin position="1"/>
        <end position="113"/>
    </location>
</feature>
<dbReference type="EMBL" id="AE009949">
    <property type="protein sequence ID" value="AAL97527.1"/>
    <property type="molecule type" value="Genomic_DNA"/>
</dbReference>
<dbReference type="RefSeq" id="WP_002985134.1">
    <property type="nucleotide sequence ID" value="NC_003485.1"/>
</dbReference>
<dbReference type="SMR" id="Q8P1H4"/>
<dbReference type="KEGG" id="spm:spyM18_0873"/>
<dbReference type="HOGENOM" id="CLU_140243_2_0_9"/>
<dbReference type="Gene3D" id="1.20.1500.10">
    <property type="entry name" value="YheA/YmcA-like"/>
    <property type="match status" value="1"/>
</dbReference>
<dbReference type="HAMAP" id="MF_01526">
    <property type="entry name" value="UPF0342"/>
    <property type="match status" value="1"/>
</dbReference>
<dbReference type="InterPro" id="IPR010368">
    <property type="entry name" value="Com_YlbF"/>
</dbReference>
<dbReference type="InterPro" id="IPR023378">
    <property type="entry name" value="YheA/YmcA-like_dom_sf"/>
</dbReference>
<dbReference type="NCBIfam" id="NF010209">
    <property type="entry name" value="PRK13676.1-1"/>
    <property type="match status" value="1"/>
</dbReference>
<dbReference type="Pfam" id="PF06133">
    <property type="entry name" value="Com_YlbF"/>
    <property type="match status" value="1"/>
</dbReference>
<dbReference type="SUPFAM" id="SSF158622">
    <property type="entry name" value="YheA/YmcA-like"/>
    <property type="match status" value="1"/>
</dbReference>
<sequence length="113" mass="12899">MSQEIYDYANQLERAVRALPEYQKVLEVKEAIQADASASQLFDEFVAMQEKIQGMMQSGQMPTAEEQTSIQELSQKIEANDQLKAYFEAQQALSVYMSDIERIVFAPLKDLVK</sequence>
<comment type="similarity">
    <text evidence="1">Belongs to the UPF0342 family.</text>
</comment>
<organism>
    <name type="scientific">Streptococcus pyogenes serotype M18 (strain MGAS8232)</name>
    <dbReference type="NCBI Taxonomy" id="186103"/>
    <lineage>
        <taxon>Bacteria</taxon>
        <taxon>Bacillati</taxon>
        <taxon>Bacillota</taxon>
        <taxon>Bacilli</taxon>
        <taxon>Lactobacillales</taxon>
        <taxon>Streptococcaceae</taxon>
        <taxon>Streptococcus</taxon>
    </lineage>
</organism>
<name>Y873_STRP8</name>
<accession>Q8P1H4</accession>
<evidence type="ECO:0000255" key="1">
    <source>
        <dbReference type="HAMAP-Rule" id="MF_01526"/>
    </source>
</evidence>
<proteinExistence type="inferred from homology"/>